<evidence type="ECO:0000255" key="1">
    <source>
        <dbReference type="HAMAP-Rule" id="MF_01398"/>
    </source>
</evidence>
<organism>
    <name type="scientific">Oenothera elata subsp. hookeri</name>
    <name type="common">Hooker's evening primrose</name>
    <name type="synonym">Oenothera hookeri</name>
    <dbReference type="NCBI Taxonomy" id="85636"/>
    <lineage>
        <taxon>Eukaryota</taxon>
        <taxon>Viridiplantae</taxon>
        <taxon>Streptophyta</taxon>
        <taxon>Embryophyta</taxon>
        <taxon>Tracheophyta</taxon>
        <taxon>Spermatophyta</taxon>
        <taxon>Magnoliopsida</taxon>
        <taxon>eudicotyledons</taxon>
        <taxon>Gunneridae</taxon>
        <taxon>Pentapetalae</taxon>
        <taxon>rosids</taxon>
        <taxon>malvids</taxon>
        <taxon>Myrtales</taxon>
        <taxon>Onagraceae</taxon>
        <taxon>Onagroideae</taxon>
        <taxon>Onagreae</taxon>
        <taxon>Oenothera</taxon>
    </lineage>
</organism>
<gene>
    <name evidence="1" type="primary">atpF</name>
</gene>
<comment type="function">
    <text evidence="1">F(1)F(0) ATP synthase produces ATP from ADP in the presence of a proton or sodium gradient. F-type ATPases consist of two structural domains, F(1) containing the extramembraneous catalytic core and F(0) containing the membrane proton channel, linked together by a central stalk and a peripheral stalk. During catalysis, ATP synthesis in the catalytic domain of F(1) is coupled via a rotary mechanism of the central stalk subunits to proton translocation.</text>
</comment>
<comment type="function">
    <text evidence="1">Component of the F(0) channel, it forms part of the peripheral stalk, linking F(1) to F(0).</text>
</comment>
<comment type="subunit">
    <text evidence="1">F-type ATPases have 2 components, F(1) - the catalytic core - and F(0) - the membrane proton channel. F(1) has five subunits: alpha(3), beta(3), gamma(1), delta(1), epsilon(1). F(0) has four main subunits: a(1), b(1), b'(1) and c(10-14). The alpha and beta chains form an alternating ring which encloses part of the gamma chain. F(1) is attached to F(0) by a central stalk formed by the gamma and epsilon chains, while a peripheral stalk is formed by the delta, b and b' chains.</text>
</comment>
<comment type="subcellular location">
    <subcellularLocation>
        <location evidence="1">Plastid</location>
        <location evidence="1">Chloroplast thylakoid membrane</location>
        <topology evidence="1">Single-pass membrane protein</topology>
    </subcellularLocation>
</comment>
<comment type="miscellaneous">
    <text>In plastids the F-type ATPase is also known as CF(1)CF(0).</text>
</comment>
<comment type="similarity">
    <text evidence="1">Belongs to the ATPase B chain family.</text>
</comment>
<sequence>MKNVTDSFVSLVHWPSAGSFGFNTDILATNPINLSVVLGVLIFFGKGVLSDLLDNRKQRILNTIRNSEELREGAIEQLEKARARLQDVQIEAEGYRAYGYFGIDEQRHESINSTYKTLEQLENNKNESIHFEQQRAINQVRQQIFQQALQGALGTLNSCLNNELHLRTISANIGLFGSMKELTD</sequence>
<accession>Q9MTL8</accession>
<keyword id="KW-0066">ATP synthesis</keyword>
<keyword id="KW-0067">ATP-binding</keyword>
<keyword id="KW-0138">CF(0)</keyword>
<keyword id="KW-0150">Chloroplast</keyword>
<keyword id="KW-0375">Hydrogen ion transport</keyword>
<keyword id="KW-0406">Ion transport</keyword>
<keyword id="KW-0472">Membrane</keyword>
<keyword id="KW-0547">Nucleotide-binding</keyword>
<keyword id="KW-0934">Plastid</keyword>
<keyword id="KW-0793">Thylakoid</keyword>
<keyword id="KW-0812">Transmembrane</keyword>
<keyword id="KW-1133">Transmembrane helix</keyword>
<keyword id="KW-0813">Transport</keyword>
<geneLocation type="chloroplast"/>
<dbReference type="EMBL" id="AJ271079">
    <property type="protein sequence ID" value="CAB67159.2"/>
    <property type="molecule type" value="Genomic_DNA"/>
</dbReference>
<dbReference type="RefSeq" id="NP_084694.2">
    <property type="nucleotide sequence ID" value="NC_002693.2"/>
</dbReference>
<dbReference type="SMR" id="Q9MTL8"/>
<dbReference type="GeneID" id="802773"/>
<dbReference type="GO" id="GO:0009535">
    <property type="term" value="C:chloroplast thylakoid membrane"/>
    <property type="evidence" value="ECO:0007669"/>
    <property type="project" value="UniProtKB-SubCell"/>
</dbReference>
<dbReference type="GO" id="GO:0045259">
    <property type="term" value="C:proton-transporting ATP synthase complex"/>
    <property type="evidence" value="ECO:0007669"/>
    <property type="project" value="UniProtKB-KW"/>
</dbReference>
<dbReference type="GO" id="GO:0005524">
    <property type="term" value="F:ATP binding"/>
    <property type="evidence" value="ECO:0007669"/>
    <property type="project" value="UniProtKB-KW"/>
</dbReference>
<dbReference type="GO" id="GO:0046933">
    <property type="term" value="F:proton-transporting ATP synthase activity, rotational mechanism"/>
    <property type="evidence" value="ECO:0007669"/>
    <property type="project" value="UniProtKB-UniRule"/>
</dbReference>
<dbReference type="CDD" id="cd06503">
    <property type="entry name" value="ATP-synt_Fo_b"/>
    <property type="match status" value="1"/>
</dbReference>
<dbReference type="HAMAP" id="MF_01398">
    <property type="entry name" value="ATP_synth_b_bprime"/>
    <property type="match status" value="1"/>
</dbReference>
<dbReference type="InterPro" id="IPR002146">
    <property type="entry name" value="ATP_synth_b/b'su_bac/chlpt"/>
</dbReference>
<dbReference type="PANTHER" id="PTHR34264">
    <property type="entry name" value="ATP SYNTHASE SUBUNIT B, CHLOROPLASTIC"/>
    <property type="match status" value="1"/>
</dbReference>
<dbReference type="PANTHER" id="PTHR34264:SF3">
    <property type="entry name" value="ATP SYNTHASE SUBUNIT B, CHLOROPLASTIC"/>
    <property type="match status" value="1"/>
</dbReference>
<dbReference type="Pfam" id="PF00430">
    <property type="entry name" value="ATP-synt_B"/>
    <property type="match status" value="1"/>
</dbReference>
<feature type="chain" id="PRO_0000082417" description="ATP synthase subunit b, chloroplastic">
    <location>
        <begin position="1"/>
        <end position="184"/>
    </location>
</feature>
<feature type="transmembrane region" description="Helical" evidence="1">
    <location>
        <begin position="27"/>
        <end position="49"/>
    </location>
</feature>
<protein>
    <recommendedName>
        <fullName evidence="1">ATP synthase subunit b, chloroplastic</fullName>
    </recommendedName>
    <alternativeName>
        <fullName evidence="1">ATP synthase F(0) sector subunit b</fullName>
    </alternativeName>
    <alternativeName>
        <fullName evidence="1">ATPase subunit I</fullName>
    </alternativeName>
</protein>
<name>ATPF_OENEH</name>
<proteinExistence type="inferred from homology"/>
<reference key="1">
    <citation type="journal article" date="2000" name="Mol. Gen. Genet.">
        <title>Complete nucleotide sequence of the Oenothera elata plastid chromosome, representing plastome I of the five distinguishable Euoenothera plastomes.</title>
        <authorList>
            <person name="Hupfer H."/>
            <person name="Swiatek M."/>
            <person name="Hornung S."/>
            <person name="Herrmann R.G."/>
            <person name="Maier R.M."/>
            <person name="Chiu W.-L."/>
            <person name="Sears B."/>
        </authorList>
    </citation>
    <scope>NUCLEOTIDE SEQUENCE [LARGE SCALE GENOMIC DNA]</scope>
    <source>
        <strain>cv. Johansen</strain>
    </source>
</reference>
<reference key="2">
    <citation type="journal article" date="2008" name="Nucleic Acids Res.">
        <title>The complete nucleotide sequences of the five genetically distinct plastid genomes of Oenothera, subsection Oenothera: I. Sequence evaluation and plastome evolution.</title>
        <authorList>
            <person name="Greiner S."/>
            <person name="Wang X."/>
            <person name="Rauwolf U."/>
            <person name="Silber M.V."/>
            <person name="Mayer K."/>
            <person name="Meurer J."/>
            <person name="Haberer G."/>
            <person name="Herrmann R.G."/>
        </authorList>
    </citation>
    <scope>SEQUENCE REVISION TO 43</scope>
</reference>